<keyword id="KW-0053">Apoptosis</keyword>
<keyword id="KW-0963">Cytoplasm</keyword>
<keyword id="KW-1185">Reference proteome</keyword>
<proteinExistence type="evidence at transcript level"/>
<accession>Q3C2I0</accession>
<accession>Q08DT4</accession>
<comment type="function">
    <text evidence="1 2">Retards apoptosis induced by IL-3 deprivation. May function in the response of hemopoietic cells to external signals and in maintaining endothelial survival during infection (By similarity). Can inhibit apoptosis induced by serum starvation in the mammary epithelial cell line HC11 (By similarity).</text>
</comment>
<comment type="subunit">
    <text evidence="2 3">Interacts directly with BCL2L11/BIM, BAK1, BID, BMF and BBC3. Interacts directly with PMAIP1 (By similarity). Interacts with BOP (By similarity). Interacts with ING4 (By similarity). Interacts with UBQLN4 (By similarity).</text>
</comment>
<comment type="subcellular location">
    <subcellularLocation>
        <location evidence="3">Cytoplasm</location>
    </subcellularLocation>
</comment>
<comment type="similarity">
    <text evidence="4">Belongs to the Bcl-2 family.</text>
</comment>
<sequence length="175" mass="20045">MTDTEFGYVHGLAEDYLKYVLQIQQPGSKPSKTSRVLQDVASSVQDEVERTLKQCLDKFDVVSVDTARTIFNQVMEKEFEDGIVNWGRIVTIFAFEGILTKKLLGKCIASDMDMCKDISFFVAEFITENTGEWIKQNGGWENGFVKKFETKSGWLTFLEVTGKICETLCRLKQYY</sequence>
<evidence type="ECO:0000250" key="1"/>
<evidence type="ECO:0000250" key="2">
    <source>
        <dbReference type="UniProtKB" id="Q07440"/>
    </source>
</evidence>
<evidence type="ECO:0000250" key="3">
    <source>
        <dbReference type="UniProtKB" id="Q16548"/>
    </source>
</evidence>
<evidence type="ECO:0000305" key="4"/>
<name>B2LA1_BOVIN</name>
<organism>
    <name type="scientific">Bos taurus</name>
    <name type="common">Bovine</name>
    <dbReference type="NCBI Taxonomy" id="9913"/>
    <lineage>
        <taxon>Eukaryota</taxon>
        <taxon>Metazoa</taxon>
        <taxon>Chordata</taxon>
        <taxon>Craniata</taxon>
        <taxon>Vertebrata</taxon>
        <taxon>Euteleostomi</taxon>
        <taxon>Mammalia</taxon>
        <taxon>Eutheria</taxon>
        <taxon>Laurasiatheria</taxon>
        <taxon>Artiodactyla</taxon>
        <taxon>Ruminantia</taxon>
        <taxon>Pecora</taxon>
        <taxon>Bovidae</taxon>
        <taxon>Bovinae</taxon>
        <taxon>Bos</taxon>
    </lineage>
</organism>
<feature type="chain" id="PRO_0000244412" description="Bcl-2-related protein A1">
    <location>
        <begin position="1"/>
        <end position="175"/>
    </location>
</feature>
<protein>
    <recommendedName>
        <fullName>Bcl-2-related protein A1</fullName>
    </recommendedName>
</protein>
<dbReference type="EMBL" id="AB195549">
    <property type="protein sequence ID" value="BAE46584.1"/>
    <property type="molecule type" value="mRNA"/>
</dbReference>
<dbReference type="EMBL" id="BC123574">
    <property type="protein sequence ID" value="AAI23575.1"/>
    <property type="molecule type" value="mRNA"/>
</dbReference>
<dbReference type="RefSeq" id="NP_001032177.1">
    <property type="nucleotide sequence ID" value="NM_001037100.3"/>
</dbReference>
<dbReference type="RefSeq" id="XP_005221925.1">
    <property type="nucleotide sequence ID" value="XM_005221868.2"/>
</dbReference>
<dbReference type="RefSeq" id="XP_059734930.1">
    <property type="nucleotide sequence ID" value="XM_059878947.1"/>
</dbReference>
<dbReference type="SMR" id="Q3C2I0"/>
<dbReference type="FunCoup" id="Q3C2I0">
    <property type="interactions" value="489"/>
</dbReference>
<dbReference type="STRING" id="9913.ENSBTAP00000000977"/>
<dbReference type="PaxDb" id="9913-ENSBTAP00000000977"/>
<dbReference type="Ensembl" id="ENSBTAT00000000977.5">
    <property type="protein sequence ID" value="ENSBTAP00000000977.3"/>
    <property type="gene ID" value="ENSBTAG00000000735.6"/>
</dbReference>
<dbReference type="GeneID" id="282151"/>
<dbReference type="KEGG" id="bta:282151"/>
<dbReference type="CTD" id="597"/>
<dbReference type="VEuPathDB" id="HostDB:ENSBTAG00000000735"/>
<dbReference type="VGNC" id="VGNC:57345">
    <property type="gene designation" value="BCL2A1"/>
</dbReference>
<dbReference type="eggNOG" id="KOG4728">
    <property type="taxonomic scope" value="Eukaryota"/>
</dbReference>
<dbReference type="GeneTree" id="ENSGT01130000278292"/>
<dbReference type="HOGENOM" id="CLU_1554763_0_0_1"/>
<dbReference type="InParanoid" id="Q3C2I0"/>
<dbReference type="OMA" id="SKITAMF"/>
<dbReference type="OrthoDB" id="8856583at2759"/>
<dbReference type="TreeFam" id="TF315834"/>
<dbReference type="Proteomes" id="UP000009136">
    <property type="component" value="Chromosome 21"/>
</dbReference>
<dbReference type="Bgee" id="ENSBTAG00000000735">
    <property type="expression patterns" value="Expressed in mesenteric lymph node and 87 other cell types or tissues"/>
</dbReference>
<dbReference type="GO" id="GO:0005737">
    <property type="term" value="C:cytoplasm"/>
    <property type="evidence" value="ECO:0000250"/>
    <property type="project" value="UniProtKB"/>
</dbReference>
<dbReference type="GO" id="GO:0005741">
    <property type="term" value="C:mitochondrial outer membrane"/>
    <property type="evidence" value="ECO:0000318"/>
    <property type="project" value="GO_Central"/>
</dbReference>
<dbReference type="GO" id="GO:0015267">
    <property type="term" value="F:channel activity"/>
    <property type="evidence" value="ECO:0000318"/>
    <property type="project" value="GO_Central"/>
</dbReference>
<dbReference type="GO" id="GO:0097192">
    <property type="term" value="P:extrinsic apoptotic signaling pathway in absence of ligand"/>
    <property type="evidence" value="ECO:0000318"/>
    <property type="project" value="GO_Central"/>
</dbReference>
<dbReference type="GO" id="GO:0008630">
    <property type="term" value="P:intrinsic apoptotic signaling pathway in response to DNA damage"/>
    <property type="evidence" value="ECO:0000318"/>
    <property type="project" value="GO_Central"/>
</dbReference>
<dbReference type="GO" id="GO:0008053">
    <property type="term" value="P:mitochondrial fusion"/>
    <property type="evidence" value="ECO:0000318"/>
    <property type="project" value="GO_Central"/>
</dbReference>
<dbReference type="GO" id="GO:0043066">
    <property type="term" value="P:negative regulation of apoptotic process"/>
    <property type="evidence" value="ECO:0000250"/>
    <property type="project" value="UniProtKB"/>
</dbReference>
<dbReference type="GO" id="GO:0043065">
    <property type="term" value="P:positive regulation of apoptotic process"/>
    <property type="evidence" value="ECO:0000318"/>
    <property type="project" value="GO_Central"/>
</dbReference>
<dbReference type="GO" id="GO:0001836">
    <property type="term" value="P:release of cytochrome c from mitochondria"/>
    <property type="evidence" value="ECO:0000318"/>
    <property type="project" value="GO_Central"/>
</dbReference>
<dbReference type="CDD" id="cd06845">
    <property type="entry name" value="Bcl-2_like"/>
    <property type="match status" value="1"/>
</dbReference>
<dbReference type="FunFam" id="1.10.437.10:FF:000008">
    <property type="entry name" value="Bcl-2-related protein A1"/>
    <property type="match status" value="1"/>
</dbReference>
<dbReference type="Gene3D" id="1.10.437.10">
    <property type="entry name" value="Blc2-like"/>
    <property type="match status" value="1"/>
</dbReference>
<dbReference type="InterPro" id="IPR036834">
    <property type="entry name" value="Bcl-2-like_sf"/>
</dbReference>
<dbReference type="InterPro" id="IPR046371">
    <property type="entry name" value="Bcl-2_BH1-3"/>
</dbReference>
<dbReference type="InterPro" id="IPR026298">
    <property type="entry name" value="Bcl-2_fam"/>
</dbReference>
<dbReference type="InterPro" id="IPR002475">
    <property type="entry name" value="Bcl2-like"/>
</dbReference>
<dbReference type="InterPro" id="IPR020717">
    <property type="entry name" value="Bcl2_BH1_motif_CS"/>
</dbReference>
<dbReference type="InterPro" id="IPR020726">
    <property type="entry name" value="Bcl2_BH2_motif_CS"/>
</dbReference>
<dbReference type="InterPro" id="IPR013282">
    <property type="entry name" value="Bcl2A1"/>
</dbReference>
<dbReference type="PANTHER" id="PTHR11256">
    <property type="entry name" value="BCL-2 RELATED"/>
    <property type="match status" value="1"/>
</dbReference>
<dbReference type="PANTHER" id="PTHR11256:SF10">
    <property type="entry name" value="BCL-2-RELATED PROTEIN A1"/>
    <property type="match status" value="1"/>
</dbReference>
<dbReference type="Pfam" id="PF00452">
    <property type="entry name" value="Bcl-2"/>
    <property type="match status" value="1"/>
</dbReference>
<dbReference type="PRINTS" id="PR01862">
    <property type="entry name" value="BCL2FAMILY"/>
</dbReference>
<dbReference type="PRINTS" id="PR01867">
    <property type="entry name" value="BCL2RLATEDA1"/>
</dbReference>
<dbReference type="SMART" id="SM00337">
    <property type="entry name" value="BCL"/>
    <property type="match status" value="1"/>
</dbReference>
<dbReference type="SUPFAM" id="SSF56854">
    <property type="entry name" value="Bcl-2 inhibitors of programmed cell death"/>
    <property type="match status" value="1"/>
</dbReference>
<dbReference type="PROSITE" id="PS50062">
    <property type="entry name" value="BCL2_FAMILY"/>
    <property type="match status" value="1"/>
</dbReference>
<dbReference type="PROSITE" id="PS01080">
    <property type="entry name" value="BH1"/>
    <property type="match status" value="1"/>
</dbReference>
<dbReference type="PROSITE" id="PS01258">
    <property type="entry name" value="BH2"/>
    <property type="match status" value="1"/>
</dbReference>
<reference key="1">
    <citation type="journal article" date="2006" name="Biol. Reprod.">
        <title>Cloning of the bovine antiapoptotic regulator, BCL2-related protein A1, and its expression in trophoblastic binucleate cells of bovine placenta.</title>
        <authorList>
            <person name="Ushizawa K."/>
            <person name="Takahashi T."/>
            <person name="Kaneyama K."/>
            <person name="Hosoe M."/>
            <person name="Hashizume K."/>
        </authorList>
    </citation>
    <scope>NUCLEOTIDE SEQUENCE [MRNA]</scope>
    <source>
        <tissue>Placenta</tissue>
    </source>
</reference>
<reference key="2">
    <citation type="submission" date="2006-09" db="EMBL/GenBank/DDBJ databases">
        <authorList>
            <consortium name="NIH - Mammalian Gene Collection (MGC) project"/>
        </authorList>
    </citation>
    <scope>NUCLEOTIDE SEQUENCE [LARGE SCALE MRNA]</scope>
    <source>
        <strain>Hereford</strain>
        <tissue>Fetal spinal cord</tissue>
    </source>
</reference>
<gene>
    <name type="primary">BCL2A1</name>
</gene>